<reference key="1">
    <citation type="submission" date="2009-10" db="EMBL/GenBank/DDBJ databases">
        <title>Characterization of Ole e 13, an allergenic thaumatin from olive fruit. Cloning and recombinant production.</title>
        <authorList>
            <person name="Villalba M."/>
            <person name="Alvarez E."/>
            <person name="Rodriguez R."/>
        </authorList>
    </citation>
    <scope>NUCLEOTIDE SEQUENCE [MRNA]</scope>
    <source>
        <tissue>Fruit</tissue>
    </source>
</reference>
<reference key="2">
    <citation type="journal article" date="2008" name="N. Engl. J. Med.">
        <title>Airway disease and thaumatin-like protein in an olive-oil mill worker.</title>
        <authorList>
            <person name="Palomares O."/>
            <person name="Alcantara M."/>
            <person name="Quiralte J."/>
            <person name="Villalba M."/>
            <person name="Garzon F."/>
            <person name="Rodriguez R."/>
        </authorList>
    </citation>
    <scope>IDENTIFICATION</scope>
    <scope>PROTEIN SEQUENCE OF 25-42</scope>
</reference>
<reference key="3">
    <citation type="journal article" date="2011" name="J. Agric. Food Chem.">
        <title>Identification of olive (Olea europaea) pulp proteins by matrix-assisted laser desorption/ionization time-of-flight mass spectrometry and nano-liquid chromatography tandem mass spectrometry.</title>
        <authorList>
            <person name="Esteve C."/>
            <person name="Canas B."/>
            <person name="Moreno-Gordaliza E."/>
            <person name="Del Rio C."/>
            <person name="Garcia M.C."/>
            <person name="Marina M.L."/>
        </authorList>
    </citation>
    <scope>IDENTIFICATION BY MASS SPECTROMETRY</scope>
    <scope>TISSUE SPECIFICITY</scope>
    <scope>POLYMORPHISM</scope>
</reference>
<reference key="4">
    <citation type="journal article" date="2012" name="Talanta">
        <title>Analysis of olive allergens.</title>
        <authorList>
            <person name="Esteve C."/>
            <person name="Montealegre C."/>
            <person name="Marina M.L."/>
            <person name="Garcia M.C."/>
        </authorList>
    </citation>
    <scope>REVIEW</scope>
    <scope>NOMENCLATURE</scope>
</reference>
<reference key="5">
    <citation type="journal article" date="2016" name="J. Mol. Graph. Model.">
        <title>Ole e 13 is the unique food allergen in olive: Structure-functional, substrates docking, and molecular allergenicity comparative analysis.</title>
        <authorList>
            <person name="Jimenez-Lopez J.C."/>
            <person name="Robles-Bolivar P."/>
            <person name="Lopez-Valverde F.J."/>
            <person name="Lima-Cabello E."/>
            <person name="Kotchoni S.O."/>
            <person name="Alche J.D."/>
        </authorList>
    </citation>
    <scope>3D-STRUCTURE MODELING</scope>
    <scope>PROPOSED FUNCTION</scope>
</reference>
<protein>
    <recommendedName>
        <fullName>Thaumatin-like protein</fullName>
    </recommendedName>
    <alternativeName>
        <fullName evidence="5">Endo-(1,3)-beta-glucanase</fullName>
        <ecNumber evidence="5">3.2.1.-</ecNumber>
    </alternativeName>
    <allergenName>Ole e 13</allergenName>
</protein>
<evidence type="ECO:0000250" key="1"/>
<evidence type="ECO:0000255" key="2"/>
<evidence type="ECO:0000255" key="3">
    <source>
        <dbReference type="PROSITE-ProRule" id="PRU00699"/>
    </source>
</evidence>
<evidence type="ECO:0000269" key="4">
    <source>
    </source>
</evidence>
<evidence type="ECO:0000305" key="5">
    <source>
    </source>
</evidence>
<keyword id="KW-0020">Allergen</keyword>
<keyword id="KW-0903">Direct protein sequencing</keyword>
<keyword id="KW-1015">Disulfide bond</keyword>
<keyword id="KW-0378">Hydrolase</keyword>
<keyword id="KW-0568">Pathogenesis-related protein</keyword>
<keyword id="KW-0611">Plant defense</keyword>
<keyword id="KW-0964">Secreted</keyword>
<keyword id="KW-0732">Signal</keyword>
<name>ALL13_OLEEU</name>
<dbReference type="EC" id="3.2.1.-" evidence="5"/>
<dbReference type="EMBL" id="GU084174">
    <property type="protein sequence ID" value="ACZ57583.1"/>
    <property type="molecule type" value="mRNA"/>
</dbReference>
<dbReference type="SMR" id="E3SU11"/>
<dbReference type="Allergome" id="12135">
    <property type="allergen name" value="Ole e 13.0101"/>
</dbReference>
<dbReference type="Allergome" id="4055">
    <property type="allergen name" value="Ole e 13"/>
</dbReference>
<dbReference type="EnsemblPlants" id="OE9A044804T1">
    <property type="protein sequence ID" value="OE9A044804C1"/>
    <property type="gene ID" value="OE9A044804"/>
</dbReference>
<dbReference type="Gramene" id="OE9A044804T1">
    <property type="protein sequence ID" value="OE9A044804C1"/>
    <property type="gene ID" value="OE9A044804"/>
</dbReference>
<dbReference type="PhylomeDB" id="E3SU11"/>
<dbReference type="GO" id="GO:0005576">
    <property type="term" value="C:extracellular region"/>
    <property type="evidence" value="ECO:0007669"/>
    <property type="project" value="UniProtKB-SubCell"/>
</dbReference>
<dbReference type="GO" id="GO:0016787">
    <property type="term" value="F:hydrolase activity"/>
    <property type="evidence" value="ECO:0007669"/>
    <property type="project" value="UniProtKB-KW"/>
</dbReference>
<dbReference type="GO" id="GO:0006952">
    <property type="term" value="P:defense response"/>
    <property type="evidence" value="ECO:0007669"/>
    <property type="project" value="UniProtKB-KW"/>
</dbReference>
<dbReference type="FunFam" id="2.60.110.10:FF:000003">
    <property type="entry name" value="Thaumatin I"/>
    <property type="match status" value="1"/>
</dbReference>
<dbReference type="Gene3D" id="2.60.110.10">
    <property type="entry name" value="Thaumatin"/>
    <property type="match status" value="1"/>
</dbReference>
<dbReference type="InterPro" id="IPR037176">
    <property type="entry name" value="Osmotin/thaumatin-like_sf"/>
</dbReference>
<dbReference type="InterPro" id="IPR001938">
    <property type="entry name" value="Thaumatin"/>
</dbReference>
<dbReference type="InterPro" id="IPR017949">
    <property type="entry name" value="Thaumatin_CS"/>
</dbReference>
<dbReference type="PANTHER" id="PTHR31048">
    <property type="entry name" value="OS03G0233200 PROTEIN"/>
    <property type="match status" value="1"/>
</dbReference>
<dbReference type="Pfam" id="PF00314">
    <property type="entry name" value="Thaumatin"/>
    <property type="match status" value="1"/>
</dbReference>
<dbReference type="PIRSF" id="PIRSF002703">
    <property type="entry name" value="Thaumatin"/>
    <property type="match status" value="1"/>
</dbReference>
<dbReference type="PRINTS" id="PR00347">
    <property type="entry name" value="THAUMATIN"/>
</dbReference>
<dbReference type="SMART" id="SM00205">
    <property type="entry name" value="THN"/>
    <property type="match status" value="1"/>
</dbReference>
<dbReference type="SUPFAM" id="SSF49870">
    <property type="entry name" value="Osmotin, thaumatin-like protein"/>
    <property type="match status" value="1"/>
</dbReference>
<dbReference type="PROSITE" id="PS00316">
    <property type="entry name" value="THAUMATIN_1"/>
    <property type="match status" value="1"/>
</dbReference>
<dbReference type="PROSITE" id="PS51367">
    <property type="entry name" value="THAUMATIN_2"/>
    <property type="match status" value="1"/>
</dbReference>
<proteinExistence type="evidence at protein level"/>
<sequence>MNFSKNLPLLVSLWAITFFAYTHAATFDIVNQCTYTVWAAASPGGGRRLDQGQSWNINVAPGTTQARIWGRTNCNFDANGRGQCETGDCNGLLECQGYGRPPNTLAEFALNQPNNLDFVDISNVDGFNIPLEFSPTTNVCRRLVCNAPIVQQCPSELRTPGGCNNPCTVFNTNEYCCTNGPGSCGPTPLSRFFKERCPDAYSYPQDDPTSLFTCPAGTNYRVVFCP</sequence>
<feature type="signal peptide" evidence="2">
    <location>
        <begin position="1"/>
        <end position="24"/>
    </location>
</feature>
<feature type="chain" id="PRO_0000421085" description="Thaumatin-like protein">
    <location>
        <begin position="25"/>
        <end position="226"/>
    </location>
</feature>
<feature type="disulfide bond" evidence="3 5">
    <location>
        <begin position="33"/>
        <end position="225"/>
    </location>
</feature>
<feature type="disulfide bond" evidence="3 5">
    <location>
        <begin position="74"/>
        <end position="84"/>
    </location>
</feature>
<feature type="disulfide bond" evidence="3 5">
    <location>
        <begin position="89"/>
        <end position="95"/>
    </location>
</feature>
<feature type="disulfide bond" evidence="3 5">
    <location>
        <begin position="140"/>
        <end position="214"/>
    </location>
</feature>
<feature type="disulfide bond" evidence="3 5">
    <location>
        <begin position="145"/>
        <end position="197"/>
    </location>
</feature>
<feature type="disulfide bond" evidence="3 5">
    <location>
        <begin position="153"/>
        <end position="163"/>
    </location>
</feature>
<feature type="disulfide bond" evidence="3 5">
    <location>
        <begin position="167"/>
        <end position="176"/>
    </location>
</feature>
<feature type="disulfide bond" evidence="3 5">
    <location>
        <begin position="177"/>
        <end position="184"/>
    </location>
</feature>
<accession>E3SU11</accession>
<comment type="function">
    <text evidence="5">3D-structure modeling suggests it may have endo-(1,3)-beta-glucanase activity.</text>
</comment>
<comment type="subcellular location">
    <subcellularLocation>
        <location evidence="1">Secreted</location>
    </subcellularLocation>
</comment>
<comment type="tissue specificity">
    <text evidence="4">Expressed in fruits.</text>
</comment>
<comment type="polymorphism">
    <text evidence="4">Variations in the sequences detected among olive varieties and within a single variety, suggesting the presence of microheterogeneity.</text>
</comment>
<comment type="allergen">
    <text evidence="5">Causes an allergic reaction in human. Is the only allergen described until now in the olive fruit. Contains epitopes responsible of cross allergenicity between food and pollen allergenic thaumatin-like proteins (PubMed:27017426).</text>
</comment>
<comment type="similarity">
    <text evidence="3">Belongs to the thaumatin family.</text>
</comment>
<organism>
    <name type="scientific">Olea europaea</name>
    <name type="common">Common olive</name>
    <dbReference type="NCBI Taxonomy" id="4146"/>
    <lineage>
        <taxon>Eukaryota</taxon>
        <taxon>Viridiplantae</taxon>
        <taxon>Streptophyta</taxon>
        <taxon>Embryophyta</taxon>
        <taxon>Tracheophyta</taxon>
        <taxon>Spermatophyta</taxon>
        <taxon>Magnoliopsida</taxon>
        <taxon>eudicotyledons</taxon>
        <taxon>Gunneridae</taxon>
        <taxon>Pentapetalae</taxon>
        <taxon>asterids</taxon>
        <taxon>lamiids</taxon>
        <taxon>Lamiales</taxon>
        <taxon>Oleaceae</taxon>
        <taxon>Oleeae</taxon>
        <taxon>Olea</taxon>
    </lineage>
</organism>